<reference key="1">
    <citation type="submission" date="2008-02" db="EMBL/GenBank/DDBJ databases">
        <title>Complete sequence of chromosome 1 of Burkholderia cenocepacia MC0-3.</title>
        <authorList>
            <person name="Copeland A."/>
            <person name="Lucas S."/>
            <person name="Lapidus A."/>
            <person name="Barry K."/>
            <person name="Bruce D."/>
            <person name="Goodwin L."/>
            <person name="Glavina del Rio T."/>
            <person name="Dalin E."/>
            <person name="Tice H."/>
            <person name="Pitluck S."/>
            <person name="Chain P."/>
            <person name="Malfatti S."/>
            <person name="Shin M."/>
            <person name="Vergez L."/>
            <person name="Schmutz J."/>
            <person name="Larimer F."/>
            <person name="Land M."/>
            <person name="Hauser L."/>
            <person name="Kyrpides N."/>
            <person name="Mikhailova N."/>
            <person name="Tiedje J."/>
            <person name="Richardson P."/>
        </authorList>
    </citation>
    <scope>NUCLEOTIDE SEQUENCE [LARGE SCALE GENOMIC DNA]</scope>
    <source>
        <strain>MC0-3</strain>
    </source>
</reference>
<protein>
    <recommendedName>
        <fullName evidence="1">Gamma-glutamyl phosphate reductase</fullName>
        <shortName evidence="1">GPR</shortName>
        <ecNumber evidence="1">1.2.1.41</ecNumber>
    </recommendedName>
    <alternativeName>
        <fullName evidence="1">Glutamate-5-semialdehyde dehydrogenase</fullName>
    </alternativeName>
    <alternativeName>
        <fullName evidence="1">Glutamyl-gamma-semialdehyde dehydrogenase</fullName>
        <shortName evidence="1">GSA dehydrogenase</shortName>
    </alternativeName>
</protein>
<sequence length="423" mass="45216">MDIDQYMTDLGRRARHASRAMARASTAAKNAALDAVARAIERDAQALKDANARDVARAREKGLDAAFVDRLTLSDKALKTMVEGLRQVASLADPIGEIGNLKFRPSGIQVGQMRVPLGVIGIIYESRPNVTIDAAALCLKSGNATILRGGSEALESNAALAKLIGEGLEAAGLPQDAVQVVATADRAAVGKLITMTEYVDVIVPRGGKSLIERLINEARVPMIKHLDGICHVYVDDRADLAKALTVCDNAKTHRYGTCNTMETLLVASGIAAKLLPRLGKLYRDKQVELRVDAAARAVLADAGVGPLVDATEEDWHTEYLAPVLAIKVVDGLDAAIEHINHYGSHHTDAIVTEDHDRAMRFLREVDSASVMVNASTRFADGFEFGLGAEIGISNDKLHARGPVGLEGLTSLKYVVLGHGEGRQ</sequence>
<evidence type="ECO:0000255" key="1">
    <source>
        <dbReference type="HAMAP-Rule" id="MF_00412"/>
    </source>
</evidence>
<name>PROA_BURO0</name>
<feature type="chain" id="PRO_1000193579" description="Gamma-glutamyl phosphate reductase">
    <location>
        <begin position="1"/>
        <end position="423"/>
    </location>
</feature>
<keyword id="KW-0028">Amino-acid biosynthesis</keyword>
<keyword id="KW-0963">Cytoplasm</keyword>
<keyword id="KW-0521">NADP</keyword>
<keyword id="KW-0560">Oxidoreductase</keyword>
<keyword id="KW-0641">Proline biosynthesis</keyword>
<gene>
    <name evidence="1" type="primary">proA</name>
    <name type="ordered locus">Bcenmc03_0624</name>
</gene>
<proteinExistence type="inferred from homology"/>
<accession>B1JVH2</accession>
<comment type="function">
    <text evidence="1">Catalyzes the NADPH-dependent reduction of L-glutamate 5-phosphate into L-glutamate 5-semialdehyde and phosphate. The product spontaneously undergoes cyclization to form 1-pyrroline-5-carboxylate.</text>
</comment>
<comment type="catalytic activity">
    <reaction evidence="1">
        <text>L-glutamate 5-semialdehyde + phosphate + NADP(+) = L-glutamyl 5-phosphate + NADPH + H(+)</text>
        <dbReference type="Rhea" id="RHEA:19541"/>
        <dbReference type="ChEBI" id="CHEBI:15378"/>
        <dbReference type="ChEBI" id="CHEBI:43474"/>
        <dbReference type="ChEBI" id="CHEBI:57783"/>
        <dbReference type="ChEBI" id="CHEBI:58066"/>
        <dbReference type="ChEBI" id="CHEBI:58274"/>
        <dbReference type="ChEBI" id="CHEBI:58349"/>
        <dbReference type="EC" id="1.2.1.41"/>
    </reaction>
</comment>
<comment type="pathway">
    <text evidence="1">Amino-acid biosynthesis; L-proline biosynthesis; L-glutamate 5-semialdehyde from L-glutamate: step 2/2.</text>
</comment>
<comment type="subcellular location">
    <subcellularLocation>
        <location evidence="1">Cytoplasm</location>
    </subcellularLocation>
</comment>
<comment type="similarity">
    <text evidence="1">Belongs to the gamma-glutamyl phosphate reductase family.</text>
</comment>
<dbReference type="EC" id="1.2.1.41" evidence="1"/>
<dbReference type="EMBL" id="CP000958">
    <property type="protein sequence ID" value="ACA89802.1"/>
    <property type="molecule type" value="Genomic_DNA"/>
</dbReference>
<dbReference type="RefSeq" id="WP_012327891.1">
    <property type="nucleotide sequence ID" value="NC_010508.1"/>
</dbReference>
<dbReference type="SMR" id="B1JVH2"/>
<dbReference type="GeneID" id="83047424"/>
<dbReference type="KEGG" id="bcm:Bcenmc03_0624"/>
<dbReference type="HOGENOM" id="CLU_030231_0_0_4"/>
<dbReference type="UniPathway" id="UPA00098">
    <property type="reaction ID" value="UER00360"/>
</dbReference>
<dbReference type="Proteomes" id="UP000002169">
    <property type="component" value="Chromosome 1"/>
</dbReference>
<dbReference type="GO" id="GO:0005737">
    <property type="term" value="C:cytoplasm"/>
    <property type="evidence" value="ECO:0007669"/>
    <property type="project" value="UniProtKB-SubCell"/>
</dbReference>
<dbReference type="GO" id="GO:0004350">
    <property type="term" value="F:glutamate-5-semialdehyde dehydrogenase activity"/>
    <property type="evidence" value="ECO:0007669"/>
    <property type="project" value="UniProtKB-UniRule"/>
</dbReference>
<dbReference type="GO" id="GO:0050661">
    <property type="term" value="F:NADP binding"/>
    <property type="evidence" value="ECO:0007669"/>
    <property type="project" value="InterPro"/>
</dbReference>
<dbReference type="GO" id="GO:0055129">
    <property type="term" value="P:L-proline biosynthetic process"/>
    <property type="evidence" value="ECO:0007669"/>
    <property type="project" value="UniProtKB-UniRule"/>
</dbReference>
<dbReference type="CDD" id="cd07079">
    <property type="entry name" value="ALDH_F18-19_ProA-GPR"/>
    <property type="match status" value="1"/>
</dbReference>
<dbReference type="FunFam" id="3.40.309.10:FF:000006">
    <property type="entry name" value="Gamma-glutamyl phosphate reductase"/>
    <property type="match status" value="1"/>
</dbReference>
<dbReference type="Gene3D" id="3.40.605.10">
    <property type="entry name" value="Aldehyde Dehydrogenase, Chain A, domain 1"/>
    <property type="match status" value="1"/>
</dbReference>
<dbReference type="Gene3D" id="3.40.309.10">
    <property type="entry name" value="Aldehyde Dehydrogenase, Chain A, domain 2"/>
    <property type="match status" value="1"/>
</dbReference>
<dbReference type="HAMAP" id="MF_00412">
    <property type="entry name" value="ProA"/>
    <property type="match status" value="1"/>
</dbReference>
<dbReference type="InterPro" id="IPR016161">
    <property type="entry name" value="Ald_DH/histidinol_DH"/>
</dbReference>
<dbReference type="InterPro" id="IPR016163">
    <property type="entry name" value="Ald_DH_C"/>
</dbReference>
<dbReference type="InterPro" id="IPR016162">
    <property type="entry name" value="Ald_DH_N"/>
</dbReference>
<dbReference type="InterPro" id="IPR015590">
    <property type="entry name" value="Aldehyde_DH_dom"/>
</dbReference>
<dbReference type="InterPro" id="IPR020593">
    <property type="entry name" value="G-glutamylP_reductase_CS"/>
</dbReference>
<dbReference type="InterPro" id="IPR012134">
    <property type="entry name" value="Glu-5-SA_DH"/>
</dbReference>
<dbReference type="InterPro" id="IPR000965">
    <property type="entry name" value="GPR_dom"/>
</dbReference>
<dbReference type="NCBIfam" id="NF001221">
    <property type="entry name" value="PRK00197.1"/>
    <property type="match status" value="1"/>
</dbReference>
<dbReference type="NCBIfam" id="TIGR00407">
    <property type="entry name" value="proA"/>
    <property type="match status" value="1"/>
</dbReference>
<dbReference type="PANTHER" id="PTHR11063:SF8">
    <property type="entry name" value="DELTA-1-PYRROLINE-5-CARBOXYLATE SYNTHASE"/>
    <property type="match status" value="1"/>
</dbReference>
<dbReference type="PANTHER" id="PTHR11063">
    <property type="entry name" value="GLUTAMATE SEMIALDEHYDE DEHYDROGENASE"/>
    <property type="match status" value="1"/>
</dbReference>
<dbReference type="Pfam" id="PF00171">
    <property type="entry name" value="Aldedh"/>
    <property type="match status" value="1"/>
</dbReference>
<dbReference type="PIRSF" id="PIRSF000151">
    <property type="entry name" value="GPR"/>
    <property type="match status" value="1"/>
</dbReference>
<dbReference type="SUPFAM" id="SSF53720">
    <property type="entry name" value="ALDH-like"/>
    <property type="match status" value="1"/>
</dbReference>
<dbReference type="PROSITE" id="PS01223">
    <property type="entry name" value="PROA"/>
    <property type="match status" value="1"/>
</dbReference>
<organism>
    <name type="scientific">Burkholderia orbicola (strain MC0-3)</name>
    <dbReference type="NCBI Taxonomy" id="406425"/>
    <lineage>
        <taxon>Bacteria</taxon>
        <taxon>Pseudomonadati</taxon>
        <taxon>Pseudomonadota</taxon>
        <taxon>Betaproteobacteria</taxon>
        <taxon>Burkholderiales</taxon>
        <taxon>Burkholderiaceae</taxon>
        <taxon>Burkholderia</taxon>
        <taxon>Burkholderia cepacia complex</taxon>
        <taxon>Burkholderia orbicola</taxon>
    </lineage>
</organism>